<feature type="chain" id="PRO_1000020664" description="tRNA dimethylallyltransferase">
    <location>
        <begin position="1"/>
        <end position="311"/>
    </location>
</feature>
<feature type="region of interest" description="Interaction with substrate tRNA" evidence="1">
    <location>
        <begin position="38"/>
        <end position="41"/>
    </location>
</feature>
<feature type="region of interest" description="Interaction with substrate tRNA" evidence="1">
    <location>
        <begin position="166"/>
        <end position="170"/>
    </location>
</feature>
<feature type="binding site" evidence="1">
    <location>
        <begin position="13"/>
        <end position="20"/>
    </location>
    <ligand>
        <name>ATP</name>
        <dbReference type="ChEBI" id="CHEBI:30616"/>
    </ligand>
</feature>
<feature type="binding site" evidence="1">
    <location>
        <begin position="15"/>
        <end position="20"/>
    </location>
    <ligand>
        <name>substrate</name>
    </ligand>
</feature>
<feature type="site" description="Interaction with substrate tRNA" evidence="1">
    <location>
        <position position="104"/>
    </location>
</feature>
<comment type="function">
    <text evidence="1">Catalyzes the transfer of a dimethylallyl group onto the adenine at position 37 in tRNAs that read codons beginning with uridine, leading to the formation of N6-(dimethylallyl)adenosine (i(6)A).</text>
</comment>
<comment type="catalytic activity">
    <reaction evidence="1">
        <text>adenosine(37) in tRNA + dimethylallyl diphosphate = N(6)-dimethylallyladenosine(37) in tRNA + diphosphate</text>
        <dbReference type="Rhea" id="RHEA:26482"/>
        <dbReference type="Rhea" id="RHEA-COMP:10162"/>
        <dbReference type="Rhea" id="RHEA-COMP:10375"/>
        <dbReference type="ChEBI" id="CHEBI:33019"/>
        <dbReference type="ChEBI" id="CHEBI:57623"/>
        <dbReference type="ChEBI" id="CHEBI:74411"/>
        <dbReference type="ChEBI" id="CHEBI:74415"/>
        <dbReference type="EC" id="2.5.1.75"/>
    </reaction>
</comment>
<comment type="cofactor">
    <cofactor evidence="1">
        <name>Mg(2+)</name>
        <dbReference type="ChEBI" id="CHEBI:18420"/>
    </cofactor>
</comment>
<comment type="subunit">
    <text evidence="1">Monomer.</text>
</comment>
<comment type="similarity">
    <text evidence="1">Belongs to the IPP transferase family.</text>
</comment>
<reference key="1">
    <citation type="book" date="2006" name="Gram positive pathogens, 2nd edition">
        <title>The Staphylococcus aureus NCTC 8325 genome.</title>
        <editorList>
            <person name="Fischetti V."/>
            <person name="Novick R."/>
            <person name="Ferretti J."/>
            <person name="Portnoy D."/>
            <person name="Rood J."/>
        </editorList>
        <authorList>
            <person name="Gillaspy A.F."/>
            <person name="Worrell V."/>
            <person name="Orvis J."/>
            <person name="Roe B.A."/>
            <person name="Dyer D.W."/>
            <person name="Iandolo J.J."/>
        </authorList>
    </citation>
    <scope>NUCLEOTIDE SEQUENCE [LARGE SCALE GENOMIC DNA]</scope>
    <source>
        <strain>NCTC 8325 / PS 47</strain>
    </source>
</reference>
<name>MIAA_STAA8</name>
<accession>Q2FYZ2</accession>
<gene>
    <name evidence="1" type="primary">miaA</name>
    <name type="ordered locus">SAOUHSC_01280</name>
</gene>
<proteinExistence type="inferred from homology"/>
<sequence length="311" mass="35868">MNKNKPFIVVIVGPTASGKTELSIELAKRINGEIISGDSMQVYKHMNIGTAKVTPEEMDGIPHHLIDILNPDDTFSAYEFKRLAEDLITDITNRGKVPIIAGGTGLYIQSLIYNYELEDETVTPAQLSIVKQKLSALEHLDNQQLHDYLAQFDAVSAENIHPNNRQRVLRAIEYYLKTKKLLSNRKKVQQFTENYDTLLLGIEMSRKTLYSRINKRVDIMLDHGLFREVQQLVEQGYESCQSMQAIGYKELIPVINGQMIYEDAVNDLKQHSRQYAKRQMTWFKNKMSVHWLDKENMSLQMMLDEITTQIK</sequence>
<protein>
    <recommendedName>
        <fullName evidence="1">tRNA dimethylallyltransferase</fullName>
        <ecNumber evidence="1">2.5.1.75</ecNumber>
    </recommendedName>
    <alternativeName>
        <fullName evidence="1">Dimethylallyl diphosphate:tRNA dimethylallyltransferase</fullName>
        <shortName evidence="1">DMAPP:tRNA dimethylallyltransferase</shortName>
        <shortName evidence="1">DMATase</shortName>
    </alternativeName>
    <alternativeName>
        <fullName evidence="1">Isopentenyl-diphosphate:tRNA isopentenyltransferase</fullName>
        <shortName evidence="1">IPP transferase</shortName>
        <shortName evidence="1">IPPT</shortName>
        <shortName evidence="1">IPTase</shortName>
    </alternativeName>
</protein>
<dbReference type="EC" id="2.5.1.75" evidence="1"/>
<dbReference type="EMBL" id="CP000253">
    <property type="protein sequence ID" value="ABD30380.1"/>
    <property type="molecule type" value="Genomic_DNA"/>
</dbReference>
<dbReference type="RefSeq" id="WP_001548613.1">
    <property type="nucleotide sequence ID" value="NZ_LS483365.1"/>
</dbReference>
<dbReference type="RefSeq" id="YP_499812.1">
    <property type="nucleotide sequence ID" value="NC_007795.1"/>
</dbReference>
<dbReference type="SMR" id="Q2FYZ2"/>
<dbReference type="STRING" id="93061.SAOUHSC_01280"/>
<dbReference type="PaxDb" id="1280-SAXN108_1308"/>
<dbReference type="GeneID" id="3919932"/>
<dbReference type="KEGG" id="sao:SAOUHSC_01280"/>
<dbReference type="PATRIC" id="fig|93061.5.peg.1173"/>
<dbReference type="eggNOG" id="COG0324">
    <property type="taxonomic scope" value="Bacteria"/>
</dbReference>
<dbReference type="HOGENOM" id="CLU_032616_0_1_9"/>
<dbReference type="OrthoDB" id="9776390at2"/>
<dbReference type="Proteomes" id="UP000008816">
    <property type="component" value="Chromosome"/>
</dbReference>
<dbReference type="GO" id="GO:0005524">
    <property type="term" value="F:ATP binding"/>
    <property type="evidence" value="ECO:0007669"/>
    <property type="project" value="UniProtKB-UniRule"/>
</dbReference>
<dbReference type="GO" id="GO:0052381">
    <property type="term" value="F:tRNA dimethylallyltransferase activity"/>
    <property type="evidence" value="ECO:0000318"/>
    <property type="project" value="GO_Central"/>
</dbReference>
<dbReference type="GO" id="GO:0006400">
    <property type="term" value="P:tRNA modification"/>
    <property type="evidence" value="ECO:0000318"/>
    <property type="project" value="GO_Central"/>
</dbReference>
<dbReference type="FunFam" id="1.10.20.140:FF:000004">
    <property type="entry name" value="tRNA dimethylallyltransferase"/>
    <property type="match status" value="1"/>
</dbReference>
<dbReference type="Gene3D" id="1.10.20.140">
    <property type="match status" value="1"/>
</dbReference>
<dbReference type="Gene3D" id="3.40.50.300">
    <property type="entry name" value="P-loop containing nucleotide triphosphate hydrolases"/>
    <property type="match status" value="1"/>
</dbReference>
<dbReference type="HAMAP" id="MF_00185">
    <property type="entry name" value="IPP_trans"/>
    <property type="match status" value="1"/>
</dbReference>
<dbReference type="InterPro" id="IPR039657">
    <property type="entry name" value="Dimethylallyltransferase"/>
</dbReference>
<dbReference type="InterPro" id="IPR018022">
    <property type="entry name" value="IPT"/>
</dbReference>
<dbReference type="InterPro" id="IPR027417">
    <property type="entry name" value="P-loop_NTPase"/>
</dbReference>
<dbReference type="NCBIfam" id="TIGR00174">
    <property type="entry name" value="miaA"/>
    <property type="match status" value="1"/>
</dbReference>
<dbReference type="PANTHER" id="PTHR11088">
    <property type="entry name" value="TRNA DIMETHYLALLYLTRANSFERASE"/>
    <property type="match status" value="1"/>
</dbReference>
<dbReference type="PANTHER" id="PTHR11088:SF60">
    <property type="entry name" value="TRNA DIMETHYLALLYLTRANSFERASE"/>
    <property type="match status" value="1"/>
</dbReference>
<dbReference type="Pfam" id="PF01715">
    <property type="entry name" value="IPPT"/>
    <property type="match status" value="1"/>
</dbReference>
<dbReference type="SUPFAM" id="SSF52540">
    <property type="entry name" value="P-loop containing nucleoside triphosphate hydrolases"/>
    <property type="match status" value="2"/>
</dbReference>
<organism>
    <name type="scientific">Staphylococcus aureus (strain NCTC 8325 / PS 47)</name>
    <dbReference type="NCBI Taxonomy" id="93061"/>
    <lineage>
        <taxon>Bacteria</taxon>
        <taxon>Bacillati</taxon>
        <taxon>Bacillota</taxon>
        <taxon>Bacilli</taxon>
        <taxon>Bacillales</taxon>
        <taxon>Staphylococcaceae</taxon>
        <taxon>Staphylococcus</taxon>
    </lineage>
</organism>
<keyword id="KW-0067">ATP-binding</keyword>
<keyword id="KW-0460">Magnesium</keyword>
<keyword id="KW-0547">Nucleotide-binding</keyword>
<keyword id="KW-1185">Reference proteome</keyword>
<keyword id="KW-0808">Transferase</keyword>
<keyword id="KW-0819">tRNA processing</keyword>
<evidence type="ECO:0000255" key="1">
    <source>
        <dbReference type="HAMAP-Rule" id="MF_00185"/>
    </source>
</evidence>